<protein>
    <recommendedName>
        <fullName evidence="1">Ribonuclease T</fullName>
        <ecNumber evidence="1">3.1.13.-</ecNumber>
    </recommendedName>
    <alternativeName>
        <fullName evidence="1">Exoribonuclease T</fullName>
        <shortName evidence="1">RNase T</shortName>
    </alternativeName>
</protein>
<proteinExistence type="inferred from homology"/>
<evidence type="ECO:0000255" key="1">
    <source>
        <dbReference type="HAMAP-Rule" id="MF_00157"/>
    </source>
</evidence>
<sequence length="223" mass="24254">MADKSDLNALSGRFRGFYPVVIDVETAGFNAKTDALLEVAAVTLKMDQDGWLQPDETLHFHVEPFEGAILEPAALAFNGIDPTNPLRGAVSEYDALHEIFKVVRKGIKDRGCNRAIIVAHNATFDHSFMAAAAERCSLKRNPFHPFATFDTAALSGLVLGQTVLAKACITAGIAFDSSQAHSALYDTNQTALLFCELVNRWKRLGGWPLALEESSLEDTSAED</sequence>
<organism>
    <name type="scientific">Pectobacterium atrosepticum (strain SCRI 1043 / ATCC BAA-672)</name>
    <name type="common">Erwinia carotovora subsp. atroseptica</name>
    <dbReference type="NCBI Taxonomy" id="218491"/>
    <lineage>
        <taxon>Bacteria</taxon>
        <taxon>Pseudomonadati</taxon>
        <taxon>Pseudomonadota</taxon>
        <taxon>Gammaproteobacteria</taxon>
        <taxon>Enterobacterales</taxon>
        <taxon>Pectobacteriaceae</taxon>
        <taxon>Pectobacterium</taxon>
    </lineage>
</organism>
<comment type="function">
    <text evidence="1">Trims short 3' overhangs of a variety of RNA species, leaving a one or two nucleotide 3' overhang. Responsible for the end-turnover of tRNA: specifically removes the terminal AMP residue from uncharged tRNA (tRNA-C-C-A). Also appears to be involved in tRNA biosynthesis.</text>
</comment>
<comment type="cofactor">
    <cofactor evidence="1">
        <name>Mg(2+)</name>
        <dbReference type="ChEBI" id="CHEBI:18420"/>
    </cofactor>
    <text evidence="1">Binds two Mg(2+) per subunit. The active form of the enzyme binds two Mg(2+) ions in its active site. The first Mg(2+) forms only one salt bridge with the protein.</text>
</comment>
<comment type="subunit">
    <text evidence="1">Homodimer.</text>
</comment>
<comment type="similarity">
    <text evidence="1">Belongs to the RNase T family.</text>
</comment>
<dbReference type="EC" id="3.1.13.-" evidence="1"/>
<dbReference type="EMBL" id="BX950851">
    <property type="protein sequence ID" value="CAG74831.1"/>
    <property type="molecule type" value="Genomic_DNA"/>
</dbReference>
<dbReference type="RefSeq" id="WP_011093495.1">
    <property type="nucleotide sequence ID" value="NC_004547.2"/>
</dbReference>
<dbReference type="SMR" id="Q6D5W0"/>
<dbReference type="STRING" id="218491.ECA1928"/>
<dbReference type="GeneID" id="57209366"/>
<dbReference type="KEGG" id="eca:ECA1928"/>
<dbReference type="PATRIC" id="fig|218491.5.peg.1961"/>
<dbReference type="eggNOG" id="COG0847">
    <property type="taxonomic scope" value="Bacteria"/>
</dbReference>
<dbReference type="HOGENOM" id="CLU_082724_0_0_6"/>
<dbReference type="OrthoDB" id="9778264at2"/>
<dbReference type="Proteomes" id="UP000007966">
    <property type="component" value="Chromosome"/>
</dbReference>
<dbReference type="GO" id="GO:0005829">
    <property type="term" value="C:cytosol"/>
    <property type="evidence" value="ECO:0007669"/>
    <property type="project" value="TreeGrafter"/>
</dbReference>
<dbReference type="GO" id="GO:0008408">
    <property type="term" value="F:3'-5' exonuclease activity"/>
    <property type="evidence" value="ECO:0007669"/>
    <property type="project" value="TreeGrafter"/>
</dbReference>
<dbReference type="GO" id="GO:0000287">
    <property type="term" value="F:magnesium ion binding"/>
    <property type="evidence" value="ECO:0007669"/>
    <property type="project" value="UniProtKB-UniRule"/>
</dbReference>
<dbReference type="GO" id="GO:0003676">
    <property type="term" value="F:nucleic acid binding"/>
    <property type="evidence" value="ECO:0007669"/>
    <property type="project" value="InterPro"/>
</dbReference>
<dbReference type="GO" id="GO:0016896">
    <property type="term" value="F:RNA exonuclease activity, producing 5'-phosphomonoesters"/>
    <property type="evidence" value="ECO:0007669"/>
    <property type="project" value="UniProtKB-UniRule"/>
</dbReference>
<dbReference type="GO" id="GO:0045004">
    <property type="term" value="P:DNA replication proofreading"/>
    <property type="evidence" value="ECO:0007669"/>
    <property type="project" value="TreeGrafter"/>
</dbReference>
<dbReference type="GO" id="GO:0008033">
    <property type="term" value="P:tRNA processing"/>
    <property type="evidence" value="ECO:0007669"/>
    <property type="project" value="UniProtKB-KW"/>
</dbReference>
<dbReference type="CDD" id="cd06134">
    <property type="entry name" value="RNaseT"/>
    <property type="match status" value="1"/>
</dbReference>
<dbReference type="FunFam" id="3.30.420.10:FF:000009">
    <property type="entry name" value="Ribonuclease T"/>
    <property type="match status" value="1"/>
</dbReference>
<dbReference type="Gene3D" id="3.30.420.10">
    <property type="entry name" value="Ribonuclease H-like superfamily/Ribonuclease H"/>
    <property type="match status" value="1"/>
</dbReference>
<dbReference type="HAMAP" id="MF_00157">
    <property type="entry name" value="RNase_T"/>
    <property type="match status" value="1"/>
</dbReference>
<dbReference type="InterPro" id="IPR013520">
    <property type="entry name" value="Exonuclease_RNaseT/DNA_pol3"/>
</dbReference>
<dbReference type="InterPro" id="IPR005987">
    <property type="entry name" value="RNase_T"/>
</dbReference>
<dbReference type="InterPro" id="IPR012337">
    <property type="entry name" value="RNaseH-like_sf"/>
</dbReference>
<dbReference type="InterPro" id="IPR036397">
    <property type="entry name" value="RNaseH_sf"/>
</dbReference>
<dbReference type="NCBIfam" id="TIGR01298">
    <property type="entry name" value="RNaseT"/>
    <property type="match status" value="1"/>
</dbReference>
<dbReference type="PANTHER" id="PTHR30231">
    <property type="entry name" value="DNA POLYMERASE III SUBUNIT EPSILON"/>
    <property type="match status" value="1"/>
</dbReference>
<dbReference type="PANTHER" id="PTHR30231:SF2">
    <property type="entry name" value="RIBONUCLEASE T"/>
    <property type="match status" value="1"/>
</dbReference>
<dbReference type="Pfam" id="PF00929">
    <property type="entry name" value="RNase_T"/>
    <property type="match status" value="1"/>
</dbReference>
<dbReference type="SMART" id="SM00479">
    <property type="entry name" value="EXOIII"/>
    <property type="match status" value="1"/>
</dbReference>
<dbReference type="SUPFAM" id="SSF53098">
    <property type="entry name" value="Ribonuclease H-like"/>
    <property type="match status" value="1"/>
</dbReference>
<feature type="chain" id="PRO_1000011394" description="Ribonuclease T">
    <location>
        <begin position="1"/>
        <end position="223"/>
    </location>
</feature>
<feature type="domain" description="Exonuclease" evidence="1">
    <location>
        <begin position="20"/>
        <end position="194"/>
    </location>
</feature>
<feature type="active site" description="Proton donor/acceptor" evidence="1">
    <location>
        <position position="181"/>
    </location>
</feature>
<feature type="binding site" evidence="1">
    <location>
        <position position="23"/>
    </location>
    <ligand>
        <name>Mg(2+)</name>
        <dbReference type="ChEBI" id="CHEBI:18420"/>
        <label>1</label>
        <note>catalytic</note>
    </ligand>
</feature>
<feature type="binding site" evidence="1">
    <location>
        <position position="23"/>
    </location>
    <ligand>
        <name>Mg(2+)</name>
        <dbReference type="ChEBI" id="CHEBI:18420"/>
        <label>2</label>
        <note>catalytic</note>
    </ligand>
</feature>
<feature type="binding site" evidence="1">
    <location>
        <position position="25"/>
    </location>
    <ligand>
        <name>Mg(2+)</name>
        <dbReference type="ChEBI" id="CHEBI:18420"/>
        <label>2</label>
        <note>catalytic</note>
    </ligand>
</feature>
<feature type="binding site" evidence="1">
    <location>
        <position position="181"/>
    </location>
    <ligand>
        <name>Mg(2+)</name>
        <dbReference type="ChEBI" id="CHEBI:18420"/>
        <label>2</label>
        <note>catalytic</note>
    </ligand>
</feature>
<feature type="binding site" evidence="1">
    <location>
        <position position="186"/>
    </location>
    <ligand>
        <name>Mg(2+)</name>
        <dbReference type="ChEBI" id="CHEBI:18420"/>
        <label>2</label>
        <note>catalytic</note>
    </ligand>
</feature>
<feature type="site" description="Important for substrate binding and specificity" evidence="1">
    <location>
        <position position="29"/>
    </location>
</feature>
<feature type="site" description="Important for substrate binding and specificity" evidence="1">
    <location>
        <position position="77"/>
    </location>
</feature>
<feature type="site" description="Important for substrate binding and specificity" evidence="1">
    <location>
        <position position="124"/>
    </location>
</feature>
<feature type="site" description="Important for substrate binding and specificity" evidence="1">
    <location>
        <position position="146"/>
    </location>
</feature>
<accession>Q6D5W0</accession>
<reference key="1">
    <citation type="journal article" date="2004" name="Proc. Natl. Acad. Sci. U.S.A.">
        <title>Genome sequence of the enterobacterial phytopathogen Erwinia carotovora subsp. atroseptica and characterization of virulence factors.</title>
        <authorList>
            <person name="Bell K.S."/>
            <person name="Sebaihia M."/>
            <person name="Pritchard L."/>
            <person name="Holden M.T.G."/>
            <person name="Hyman L.J."/>
            <person name="Holeva M.C."/>
            <person name="Thomson N.R."/>
            <person name="Bentley S.D."/>
            <person name="Churcher L.J.C."/>
            <person name="Mungall K."/>
            <person name="Atkin R."/>
            <person name="Bason N."/>
            <person name="Brooks K."/>
            <person name="Chillingworth T."/>
            <person name="Clark K."/>
            <person name="Doggett J."/>
            <person name="Fraser A."/>
            <person name="Hance Z."/>
            <person name="Hauser H."/>
            <person name="Jagels K."/>
            <person name="Moule S."/>
            <person name="Norbertczak H."/>
            <person name="Ormond D."/>
            <person name="Price C."/>
            <person name="Quail M.A."/>
            <person name="Sanders M."/>
            <person name="Walker D."/>
            <person name="Whitehead S."/>
            <person name="Salmond G.P.C."/>
            <person name="Birch P.R.J."/>
            <person name="Parkhill J."/>
            <person name="Toth I.K."/>
        </authorList>
    </citation>
    <scope>NUCLEOTIDE SEQUENCE [LARGE SCALE GENOMIC DNA]</scope>
    <source>
        <strain>SCRI 1043 / ATCC BAA-672</strain>
    </source>
</reference>
<gene>
    <name evidence="1" type="primary">rnt</name>
    <name type="ordered locus">ECA1928</name>
</gene>
<keyword id="KW-0269">Exonuclease</keyword>
<keyword id="KW-0378">Hydrolase</keyword>
<keyword id="KW-0460">Magnesium</keyword>
<keyword id="KW-0479">Metal-binding</keyword>
<keyword id="KW-0540">Nuclease</keyword>
<keyword id="KW-1185">Reference proteome</keyword>
<keyword id="KW-0819">tRNA processing</keyword>
<name>RNT_PECAS</name>